<accession>P02274</accession>
<name>H2A1_TETPY</name>
<reference key="1">
    <citation type="journal article" date="1983" name="J. Biochem.">
        <title>Tetrahymena histone H2A. Isolation and two variant sequences.</title>
        <authorList>
            <person name="Fusauchi Y."/>
            <person name="Iwai K."/>
        </authorList>
    </citation>
    <scope>PROTEIN SEQUENCE OF 2-133</scope>
</reference>
<reference key="2">
    <citation type="journal article" date="1984" name="J. Biochem.">
        <title>Tetrahymena histone H2A. Acetylation in the N-terminal sequence and phosphorylation in the C-terminal sequence.</title>
        <authorList>
            <person name="Fusauchi Y."/>
            <person name="Iwai K."/>
        </authorList>
    </citation>
    <scope>ACETYLATION AT SER-2; LYS-6 AND LYS-13</scope>
    <scope>PHOSPHORYLATION AT SER-123 AND SER-129</scope>
</reference>
<reference key="3">
    <citation type="journal article" date="1985" name="J. Biochem.">
        <title>Tetrahymena ubiquitin-histone conjugate uH2A. Isolation and structural analysis.</title>
        <authorList>
            <person name="Fusauchi Y."/>
            <person name="Iwai K."/>
        </authorList>
    </citation>
    <scope>UBIQUITINATION</scope>
    <scope>IDENTIFICATION OF PROBABLE UBIQUITINATION SITE</scope>
</reference>
<feature type="initiator methionine" description="Removed" evidence="3 4">
    <location>
        <position position="1"/>
    </location>
</feature>
<feature type="chain" id="PRO_0000055285" description="Histone H2A.1">
    <location>
        <begin position="2"/>
        <end position="133"/>
    </location>
</feature>
<feature type="region of interest" description="Disordered" evidence="2">
    <location>
        <begin position="1"/>
        <end position="23"/>
    </location>
</feature>
<feature type="modified residue" description="N-acetylserine" evidence="3">
    <location>
        <position position="2"/>
    </location>
</feature>
<feature type="modified residue" description="N6-acetyllysine" evidence="3">
    <location>
        <position position="6"/>
    </location>
</feature>
<feature type="modified residue" description="N6-acetyllysine" evidence="1">
    <location>
        <position position="9"/>
    </location>
</feature>
<feature type="modified residue" description="N6-acetyllysine" evidence="1">
    <location>
        <position position="11"/>
    </location>
</feature>
<feature type="modified residue" description="N6-acetyllysine" evidence="3">
    <location>
        <position position="13"/>
    </location>
</feature>
<feature type="modified residue" description="N6-acetyllysine" evidence="1">
    <location>
        <position position="18"/>
    </location>
</feature>
<feature type="modified residue" description="Phosphoserine" evidence="3">
    <location>
        <position position="123"/>
    </location>
</feature>
<feature type="modified residue" description="Phosphoserine" evidence="3">
    <location>
        <position position="129"/>
    </location>
</feature>
<feature type="cross-link" description="Glycyl lysine isopeptide (Lys-Gly) (interchain with G-Cter in ubiquitin)" evidence="6">
    <location>
        <position position="124"/>
    </location>
</feature>
<organism>
    <name type="scientific">Tetrahymena pyriformis</name>
    <dbReference type="NCBI Taxonomy" id="5908"/>
    <lineage>
        <taxon>Eukaryota</taxon>
        <taxon>Sar</taxon>
        <taxon>Alveolata</taxon>
        <taxon>Ciliophora</taxon>
        <taxon>Intramacronucleata</taxon>
        <taxon>Oligohymenophorea</taxon>
        <taxon>Hymenostomatida</taxon>
        <taxon>Tetrahymenina</taxon>
        <taxon>Tetrahymenidae</taxon>
        <taxon>Tetrahymena</taxon>
    </lineage>
</organism>
<evidence type="ECO:0000250" key="1"/>
<evidence type="ECO:0000256" key="2">
    <source>
        <dbReference type="SAM" id="MobiDB-lite"/>
    </source>
</evidence>
<evidence type="ECO:0000269" key="3">
    <source>
    </source>
</evidence>
<evidence type="ECO:0000269" key="4">
    <source>
    </source>
</evidence>
<evidence type="ECO:0000305" key="5"/>
<evidence type="ECO:0000305" key="6">
    <source>
    </source>
</evidence>
<comment type="function">
    <text>Core component of nucleosome. Nucleosomes wrap and compact DNA into chromatin, limiting DNA accessibility to the cellular machineries which require DNA as a template. Histones thereby play a central role in transcription regulation, DNA repair, DNA replication and chromosomal stability. DNA accessibility is regulated via a complex set of post-translational modifications of histones, also called histone code, and nucleosome remodeling.</text>
</comment>
<comment type="subunit">
    <text>The nucleosome is a histone octamer containing two molecules each of H2A, H2B, H3 and H4 assembled in one H3-H4 heterotetramer and two H2A-H2B heterodimers. The octamer wraps approximately 147 bp of DNA.</text>
</comment>
<comment type="subcellular location">
    <subcellularLocation>
        <location>Nucleus</location>
    </subcellularLocation>
    <subcellularLocation>
        <location>Chromosome</location>
    </subcellularLocation>
    <text evidence="1">Localizes to both the large, transcriptionally active, somatic macronucleus (MAC) and the small, transcriptionally inert, germ line micronucleus (MIC).</text>
</comment>
<comment type="PTM">
    <text evidence="1">Monoubiquitination of Lys-124 gives a specific tag for epigenetic transcriptional repression.</text>
</comment>
<comment type="PTM">
    <text evidence="1">Acetylation occurs almost exclusively in the MAC.</text>
</comment>
<comment type="similarity">
    <text evidence="5">Belongs to the histone H2A family.</text>
</comment>
<comment type="caution">
    <text evidence="5">To ensure consistency between histone entries, we follow the 'Brno' nomenclature for histone modifications, with positions referring to those used in the literature for the 'closest' model organism. Due to slight variations in histone sequences between organisms and to the presence of initiator methionine in UniProtKB/Swiss-Prot sequences, the actual positions of modified amino acids in the sequence generally differ. In this entry the following conventions are used: H2AK5ac = acetylated Lys-6; H2AK8ac = acetylated Lys-9; H2AK10ac = acetylated Lys-11; H2AK12ac = acetylated Lys-13; H2AK17ac = acetylated Lys-18; H2AS122ph = phosphorylated Ser-123; H2AK123ub1 = monoubiquitinated Lys-124; H2AS127ph = phosphorylated Ser-128.</text>
</comment>
<gene>
    <name type="primary">HTA2</name>
</gene>
<protein>
    <recommendedName>
        <fullName>Histone H2A.1</fullName>
    </recommendedName>
    <alternativeName>
        <fullName>Histone H2A.2</fullName>
    </alternativeName>
</protein>
<keyword id="KW-0007">Acetylation</keyword>
<keyword id="KW-0158">Chromosome</keyword>
<keyword id="KW-0903">Direct protein sequencing</keyword>
<keyword id="KW-0238">DNA-binding</keyword>
<keyword id="KW-1017">Isopeptide bond</keyword>
<keyword id="KW-0544">Nucleosome core</keyword>
<keyword id="KW-0539">Nucleus</keyword>
<keyword id="KW-0597">Phosphoprotein</keyword>
<keyword id="KW-0832">Ubl conjugation</keyword>
<sequence length="133" mass="14257">MSTTGKGGKAKGKTASSKQVSRSARAGLQFPVGRISRFLKNGRYSERIGTGAPVYLAAVLEYLAAEVLELAGNAAKDNKKTRIVPRHILLAIRNDEELNKLMANTTIADGGVLPNINPMLLPSKTKKTSEAEH</sequence>
<proteinExistence type="evidence at protein level"/>
<dbReference type="PIR" id="A02601">
    <property type="entry name" value="HSTE92"/>
</dbReference>
<dbReference type="SMR" id="P02274"/>
<dbReference type="iPTMnet" id="P02274"/>
<dbReference type="GO" id="GO:0000786">
    <property type="term" value="C:nucleosome"/>
    <property type="evidence" value="ECO:0007669"/>
    <property type="project" value="UniProtKB-KW"/>
</dbReference>
<dbReference type="GO" id="GO:0005634">
    <property type="term" value="C:nucleus"/>
    <property type="evidence" value="ECO:0007669"/>
    <property type="project" value="UniProtKB-SubCell"/>
</dbReference>
<dbReference type="GO" id="GO:0003677">
    <property type="term" value="F:DNA binding"/>
    <property type="evidence" value="ECO:0007669"/>
    <property type="project" value="UniProtKB-KW"/>
</dbReference>
<dbReference type="GO" id="GO:0046982">
    <property type="term" value="F:protein heterodimerization activity"/>
    <property type="evidence" value="ECO:0007669"/>
    <property type="project" value="InterPro"/>
</dbReference>
<dbReference type="GO" id="GO:0030527">
    <property type="term" value="F:structural constituent of chromatin"/>
    <property type="evidence" value="ECO:0007669"/>
    <property type="project" value="InterPro"/>
</dbReference>
<dbReference type="CDD" id="cd00074">
    <property type="entry name" value="HFD_H2A"/>
    <property type="match status" value="1"/>
</dbReference>
<dbReference type="FunFam" id="1.10.20.10:FF:000026">
    <property type="entry name" value="Histone H2A"/>
    <property type="match status" value="1"/>
</dbReference>
<dbReference type="Gene3D" id="1.10.20.10">
    <property type="entry name" value="Histone, subunit A"/>
    <property type="match status" value="1"/>
</dbReference>
<dbReference type="InterPro" id="IPR009072">
    <property type="entry name" value="Histone-fold"/>
</dbReference>
<dbReference type="InterPro" id="IPR002119">
    <property type="entry name" value="Histone_H2A"/>
</dbReference>
<dbReference type="InterPro" id="IPR007125">
    <property type="entry name" value="Histone_H2A/H2B/H3"/>
</dbReference>
<dbReference type="InterPro" id="IPR032454">
    <property type="entry name" value="Histone_H2A_C"/>
</dbReference>
<dbReference type="InterPro" id="IPR032458">
    <property type="entry name" value="Histone_H2A_CS"/>
</dbReference>
<dbReference type="PANTHER" id="PTHR23430">
    <property type="entry name" value="HISTONE H2A"/>
    <property type="match status" value="1"/>
</dbReference>
<dbReference type="Pfam" id="PF00125">
    <property type="entry name" value="Histone"/>
    <property type="match status" value="1"/>
</dbReference>
<dbReference type="Pfam" id="PF16211">
    <property type="entry name" value="Histone_H2A_C"/>
    <property type="match status" value="1"/>
</dbReference>
<dbReference type="PRINTS" id="PR00620">
    <property type="entry name" value="HISTONEH2A"/>
</dbReference>
<dbReference type="SMART" id="SM00414">
    <property type="entry name" value="H2A"/>
    <property type="match status" value="1"/>
</dbReference>
<dbReference type="SUPFAM" id="SSF47113">
    <property type="entry name" value="Histone-fold"/>
    <property type="match status" value="1"/>
</dbReference>
<dbReference type="PROSITE" id="PS00046">
    <property type="entry name" value="HISTONE_H2A"/>
    <property type="match status" value="1"/>
</dbReference>